<proteinExistence type="inferred from homology"/>
<organism>
    <name type="scientific">Staphylococcus aureus (strain JH9)</name>
    <dbReference type="NCBI Taxonomy" id="359786"/>
    <lineage>
        <taxon>Bacteria</taxon>
        <taxon>Bacillati</taxon>
        <taxon>Bacillota</taxon>
        <taxon>Bacilli</taxon>
        <taxon>Bacillales</taxon>
        <taxon>Staphylococcaceae</taxon>
        <taxon>Staphylococcus</taxon>
    </lineage>
</organism>
<evidence type="ECO:0000255" key="1">
    <source>
        <dbReference type="HAMAP-Rule" id="MF_00740"/>
    </source>
</evidence>
<sequence length="392" mass="43796">MTRPFNRVHLIVMDSVGIGEAPDAADFKDEGSHTLRHTLEGFDQTLPNLEKLGLGNIDKLPVVNAVEQPEAYYTKLSEASVGKDTMTGHWEIMGLNIMQPFKVYPNGFPEELIQQIEEMTGRKVVANKPASGTQIIDEWGEHQMKTGDLIVYTSADPVLQIAAHEDIIPLEELYDICEKVRELTKDPKYLIGRIIARPYVGEPGNFTRTSNRHDYALKPFGKTVLDHLKDGGYDVIAIGKINDIYDGEGVTEAVRTKSNMDGMDQLMKIVKKDFTGISFLNLVDFDALYGHRRDKPGYAQAIKDFDDRLPELFSNLKEDDLVIITADHGNDPTAPGTDHTREYIPVIMYSPKFKGGHALESDTTFSSIGATIADNFNVTLPEFGKSYLKELK</sequence>
<protein>
    <recommendedName>
        <fullName evidence="1">Phosphopentomutase</fullName>
        <ecNumber evidence="1">5.4.2.7</ecNumber>
    </recommendedName>
    <alternativeName>
        <fullName evidence="1">Phosphodeoxyribomutase</fullName>
    </alternativeName>
</protein>
<feature type="chain" id="PRO_1000083445" description="Phosphopentomutase">
    <location>
        <begin position="1"/>
        <end position="392"/>
    </location>
</feature>
<feature type="binding site" evidence="1">
    <location>
        <position position="14"/>
    </location>
    <ligand>
        <name>Mn(2+)</name>
        <dbReference type="ChEBI" id="CHEBI:29035"/>
        <label>1</label>
    </ligand>
</feature>
<feature type="binding site" evidence="1">
    <location>
        <position position="286"/>
    </location>
    <ligand>
        <name>Mn(2+)</name>
        <dbReference type="ChEBI" id="CHEBI:29035"/>
        <label>2</label>
    </ligand>
</feature>
<feature type="binding site" evidence="1">
    <location>
        <position position="291"/>
    </location>
    <ligand>
        <name>Mn(2+)</name>
        <dbReference type="ChEBI" id="CHEBI:29035"/>
        <label>2</label>
    </ligand>
</feature>
<feature type="binding site" evidence="1">
    <location>
        <position position="327"/>
    </location>
    <ligand>
        <name>Mn(2+)</name>
        <dbReference type="ChEBI" id="CHEBI:29035"/>
        <label>1</label>
    </ligand>
</feature>
<feature type="binding site" evidence="1">
    <location>
        <position position="328"/>
    </location>
    <ligand>
        <name>Mn(2+)</name>
        <dbReference type="ChEBI" id="CHEBI:29035"/>
        <label>1</label>
    </ligand>
</feature>
<feature type="binding site" evidence="1">
    <location>
        <position position="339"/>
    </location>
    <ligand>
        <name>Mn(2+)</name>
        <dbReference type="ChEBI" id="CHEBI:29035"/>
        <label>2</label>
    </ligand>
</feature>
<comment type="function">
    <text evidence="1">Isomerase that catalyzes the conversion of deoxy-ribose 1-phosphate (dRib-1-P) and ribose 1-phosphate (Rib-1-P) to deoxy-ribose 5-phosphate (dRib-5-P) and ribose 5-phosphate (Rib-5-P), respectively.</text>
</comment>
<comment type="catalytic activity">
    <reaction evidence="1">
        <text>2-deoxy-alpha-D-ribose 1-phosphate = 2-deoxy-D-ribose 5-phosphate</text>
        <dbReference type="Rhea" id="RHEA:27658"/>
        <dbReference type="ChEBI" id="CHEBI:57259"/>
        <dbReference type="ChEBI" id="CHEBI:62877"/>
        <dbReference type="EC" id="5.4.2.7"/>
    </reaction>
</comment>
<comment type="catalytic activity">
    <reaction evidence="1">
        <text>alpha-D-ribose 1-phosphate = D-ribose 5-phosphate</text>
        <dbReference type="Rhea" id="RHEA:18793"/>
        <dbReference type="ChEBI" id="CHEBI:57720"/>
        <dbReference type="ChEBI" id="CHEBI:78346"/>
        <dbReference type="EC" id="5.4.2.7"/>
    </reaction>
</comment>
<comment type="cofactor">
    <cofactor evidence="1">
        <name>Mn(2+)</name>
        <dbReference type="ChEBI" id="CHEBI:29035"/>
    </cofactor>
    <text evidence="1">Binds 2 manganese ions.</text>
</comment>
<comment type="pathway">
    <text evidence="1">Carbohydrate degradation; 2-deoxy-D-ribose 1-phosphate degradation; D-glyceraldehyde 3-phosphate and acetaldehyde from 2-deoxy-alpha-D-ribose 1-phosphate: step 1/2.</text>
</comment>
<comment type="subcellular location">
    <subcellularLocation>
        <location evidence="1">Cytoplasm</location>
    </subcellularLocation>
</comment>
<comment type="similarity">
    <text evidence="1">Belongs to the phosphopentomutase family.</text>
</comment>
<keyword id="KW-0963">Cytoplasm</keyword>
<keyword id="KW-0413">Isomerase</keyword>
<keyword id="KW-0464">Manganese</keyword>
<keyword id="KW-0479">Metal-binding</keyword>
<dbReference type="EC" id="5.4.2.7" evidence="1"/>
<dbReference type="EMBL" id="CP000703">
    <property type="protein sequence ID" value="ABQ47932.1"/>
    <property type="molecule type" value="Genomic_DNA"/>
</dbReference>
<dbReference type="RefSeq" id="WP_000197806.1">
    <property type="nucleotide sequence ID" value="NC_009487.1"/>
</dbReference>
<dbReference type="SMR" id="A5IP09"/>
<dbReference type="KEGG" id="saj:SaurJH9_0125"/>
<dbReference type="HOGENOM" id="CLU_053861_0_0_9"/>
<dbReference type="UniPathway" id="UPA00002">
    <property type="reaction ID" value="UER00467"/>
</dbReference>
<dbReference type="GO" id="GO:0005829">
    <property type="term" value="C:cytosol"/>
    <property type="evidence" value="ECO:0007669"/>
    <property type="project" value="TreeGrafter"/>
</dbReference>
<dbReference type="GO" id="GO:0000287">
    <property type="term" value="F:magnesium ion binding"/>
    <property type="evidence" value="ECO:0007669"/>
    <property type="project" value="InterPro"/>
</dbReference>
<dbReference type="GO" id="GO:0030145">
    <property type="term" value="F:manganese ion binding"/>
    <property type="evidence" value="ECO:0007669"/>
    <property type="project" value="UniProtKB-UniRule"/>
</dbReference>
<dbReference type="GO" id="GO:0008973">
    <property type="term" value="F:phosphopentomutase activity"/>
    <property type="evidence" value="ECO:0007669"/>
    <property type="project" value="UniProtKB-UniRule"/>
</dbReference>
<dbReference type="GO" id="GO:0006018">
    <property type="term" value="P:2-deoxyribose 1-phosphate catabolic process"/>
    <property type="evidence" value="ECO:0007669"/>
    <property type="project" value="UniProtKB-UniRule"/>
</dbReference>
<dbReference type="GO" id="GO:0006015">
    <property type="term" value="P:5-phosphoribose 1-diphosphate biosynthetic process"/>
    <property type="evidence" value="ECO:0007669"/>
    <property type="project" value="UniProtKB-UniPathway"/>
</dbReference>
<dbReference type="GO" id="GO:0043094">
    <property type="term" value="P:metabolic compound salvage"/>
    <property type="evidence" value="ECO:0007669"/>
    <property type="project" value="InterPro"/>
</dbReference>
<dbReference type="GO" id="GO:0009117">
    <property type="term" value="P:nucleotide metabolic process"/>
    <property type="evidence" value="ECO:0007669"/>
    <property type="project" value="InterPro"/>
</dbReference>
<dbReference type="CDD" id="cd16009">
    <property type="entry name" value="PPM"/>
    <property type="match status" value="1"/>
</dbReference>
<dbReference type="FunFam" id="3.30.70.1250:FF:000001">
    <property type="entry name" value="Phosphopentomutase"/>
    <property type="match status" value="1"/>
</dbReference>
<dbReference type="Gene3D" id="3.40.720.10">
    <property type="entry name" value="Alkaline Phosphatase, subunit A"/>
    <property type="match status" value="1"/>
</dbReference>
<dbReference type="Gene3D" id="3.30.70.1250">
    <property type="entry name" value="Phosphopentomutase"/>
    <property type="match status" value="1"/>
</dbReference>
<dbReference type="HAMAP" id="MF_00740">
    <property type="entry name" value="Phosphopentomut"/>
    <property type="match status" value="1"/>
</dbReference>
<dbReference type="InterPro" id="IPR017850">
    <property type="entry name" value="Alkaline_phosphatase_core_sf"/>
</dbReference>
<dbReference type="InterPro" id="IPR010045">
    <property type="entry name" value="DeoB"/>
</dbReference>
<dbReference type="InterPro" id="IPR006124">
    <property type="entry name" value="Metalloenzyme"/>
</dbReference>
<dbReference type="InterPro" id="IPR024052">
    <property type="entry name" value="Phosphopentomutase_DeoB_cap_sf"/>
</dbReference>
<dbReference type="NCBIfam" id="TIGR01696">
    <property type="entry name" value="deoB"/>
    <property type="match status" value="1"/>
</dbReference>
<dbReference type="NCBIfam" id="NF003766">
    <property type="entry name" value="PRK05362.1"/>
    <property type="match status" value="1"/>
</dbReference>
<dbReference type="PANTHER" id="PTHR21110">
    <property type="entry name" value="PHOSPHOPENTOMUTASE"/>
    <property type="match status" value="1"/>
</dbReference>
<dbReference type="PANTHER" id="PTHR21110:SF0">
    <property type="entry name" value="PHOSPHOPENTOMUTASE"/>
    <property type="match status" value="1"/>
</dbReference>
<dbReference type="Pfam" id="PF01676">
    <property type="entry name" value="Metalloenzyme"/>
    <property type="match status" value="1"/>
</dbReference>
<dbReference type="PIRSF" id="PIRSF001491">
    <property type="entry name" value="Ppentomutase"/>
    <property type="match status" value="1"/>
</dbReference>
<dbReference type="SUPFAM" id="SSF53649">
    <property type="entry name" value="Alkaline phosphatase-like"/>
    <property type="match status" value="1"/>
</dbReference>
<dbReference type="SUPFAM" id="SSF143856">
    <property type="entry name" value="DeoB insert domain-like"/>
    <property type="match status" value="1"/>
</dbReference>
<gene>
    <name evidence="1" type="primary">deoB</name>
    <name type="ordered locus">SaurJH9_0125</name>
</gene>
<accession>A5IP09</accession>
<name>DEOB_STAA9</name>
<reference key="1">
    <citation type="submission" date="2007-05" db="EMBL/GenBank/DDBJ databases">
        <title>Complete sequence of chromosome of Staphylococcus aureus subsp. aureus JH9.</title>
        <authorList>
            <consortium name="US DOE Joint Genome Institute"/>
            <person name="Copeland A."/>
            <person name="Lucas S."/>
            <person name="Lapidus A."/>
            <person name="Barry K."/>
            <person name="Detter J.C."/>
            <person name="Glavina del Rio T."/>
            <person name="Hammon N."/>
            <person name="Israni S."/>
            <person name="Pitluck S."/>
            <person name="Chain P."/>
            <person name="Malfatti S."/>
            <person name="Shin M."/>
            <person name="Vergez L."/>
            <person name="Schmutz J."/>
            <person name="Larimer F."/>
            <person name="Land M."/>
            <person name="Hauser L."/>
            <person name="Kyrpides N."/>
            <person name="Kim E."/>
            <person name="Tomasz A."/>
            <person name="Richardson P."/>
        </authorList>
    </citation>
    <scope>NUCLEOTIDE SEQUENCE [LARGE SCALE GENOMIC DNA]</scope>
    <source>
        <strain>JH9</strain>
    </source>
</reference>